<evidence type="ECO:0000255" key="1">
    <source>
        <dbReference type="HAMAP-Rule" id="MF_04004"/>
    </source>
</evidence>
<organismHost>
    <name type="scientific">Homo sapiens</name>
    <name type="common">Human</name>
    <dbReference type="NCBI Taxonomy" id="9606"/>
</organismHost>
<name>VE7_HPV66</name>
<proteinExistence type="inferred from homology"/>
<reference key="1">
    <citation type="journal article" date="1991" name="J. Clin. Microbiol.">
        <title>Characterization of human papillomavirus type 66 from an invasive carcinoma of the uterine cervix.</title>
        <authorList>
            <person name="Tawheed A.R."/>
            <person name="Beaudenon S."/>
            <person name="Favre M."/>
            <person name="Orth G."/>
        </authorList>
    </citation>
    <scope>NUCLEOTIDE SEQUENCE [GENOMIC DNA]</scope>
</reference>
<reference key="2">
    <citation type="submission" date="1995-10" db="EMBL/GenBank/DDBJ databases">
        <authorList>
            <person name="Delius H."/>
        </authorList>
    </citation>
    <scope>NUCLEOTIDE SEQUENCE [GENOMIC DNA]</scope>
</reference>
<reference key="3">
    <citation type="journal article" date="2002" name="Rev. Med. Virol.">
        <title>Interactions of SV40 large T antigen and other viral proteins with retinoblastoma tumour suppressor.</title>
        <authorList>
            <person name="Lee C."/>
            <person name="Cho Y."/>
        </authorList>
    </citation>
    <scope>REVIEW</scope>
</reference>
<organism>
    <name type="scientific">Human papillomavirus 66</name>
    <dbReference type="NCBI Taxonomy" id="37119"/>
    <lineage>
        <taxon>Viruses</taxon>
        <taxon>Monodnaviria</taxon>
        <taxon>Shotokuvirae</taxon>
        <taxon>Cossaviricota</taxon>
        <taxon>Papovaviricetes</taxon>
        <taxon>Zurhausenvirales</taxon>
        <taxon>Papillomaviridae</taxon>
        <taxon>Firstpapillomavirinae</taxon>
        <taxon>Alphapapillomavirus</taxon>
        <taxon>Alphapapillomavirus 6</taxon>
    </lineage>
</organism>
<dbReference type="EMBL" id="M75123">
    <property type="status" value="NOT_ANNOTATED_CDS"/>
    <property type="molecule type" value="Genomic_DNA"/>
</dbReference>
<dbReference type="EMBL" id="U31794">
    <property type="protein sequence ID" value="AAA79500.1"/>
    <property type="molecule type" value="Genomic_DNA"/>
</dbReference>
<dbReference type="PIR" id="B44890">
    <property type="entry name" value="B44890"/>
</dbReference>
<dbReference type="SMR" id="Q80956"/>
<dbReference type="Proteomes" id="UP000007673">
    <property type="component" value="Genome"/>
</dbReference>
<dbReference type="GO" id="GO:0030430">
    <property type="term" value="C:host cell cytoplasm"/>
    <property type="evidence" value="ECO:0007669"/>
    <property type="project" value="UniProtKB-SubCell"/>
</dbReference>
<dbReference type="GO" id="GO:0042025">
    <property type="term" value="C:host cell nucleus"/>
    <property type="evidence" value="ECO:0007669"/>
    <property type="project" value="UniProtKB-SubCell"/>
</dbReference>
<dbReference type="GO" id="GO:0003677">
    <property type="term" value="F:DNA binding"/>
    <property type="evidence" value="ECO:0007669"/>
    <property type="project" value="UniProtKB-UniRule"/>
</dbReference>
<dbReference type="GO" id="GO:0003700">
    <property type="term" value="F:DNA-binding transcription factor activity"/>
    <property type="evidence" value="ECO:0007669"/>
    <property type="project" value="UniProtKB-UniRule"/>
</dbReference>
<dbReference type="GO" id="GO:0019904">
    <property type="term" value="F:protein domain specific binding"/>
    <property type="evidence" value="ECO:0007669"/>
    <property type="project" value="UniProtKB-UniRule"/>
</dbReference>
<dbReference type="GO" id="GO:0008270">
    <property type="term" value="F:zinc ion binding"/>
    <property type="evidence" value="ECO:0007669"/>
    <property type="project" value="UniProtKB-KW"/>
</dbReference>
<dbReference type="GO" id="GO:0006351">
    <property type="term" value="P:DNA-templated transcription"/>
    <property type="evidence" value="ECO:0007669"/>
    <property type="project" value="UniProtKB-UniRule"/>
</dbReference>
<dbReference type="GO" id="GO:0039645">
    <property type="term" value="P:symbiont-mediated perturbation of host cell cycle G1/S transition checkpoint"/>
    <property type="evidence" value="ECO:0007669"/>
    <property type="project" value="UniProtKB-UniRule"/>
</dbReference>
<dbReference type="GO" id="GO:0052170">
    <property type="term" value="P:symbiont-mediated suppression of host innate immune response"/>
    <property type="evidence" value="ECO:0007669"/>
    <property type="project" value="UniProtKB-KW"/>
</dbReference>
<dbReference type="GO" id="GO:0039502">
    <property type="term" value="P:symbiont-mediated suppression of host type I interferon-mediated signaling pathway"/>
    <property type="evidence" value="ECO:0007669"/>
    <property type="project" value="UniProtKB-UniRule"/>
</dbReference>
<dbReference type="Gene3D" id="3.30.160.330">
    <property type="match status" value="1"/>
</dbReference>
<dbReference type="HAMAP" id="MF_04004">
    <property type="entry name" value="PPV_E7"/>
    <property type="match status" value="1"/>
</dbReference>
<dbReference type="InterPro" id="IPR000148">
    <property type="entry name" value="Papilloma_E7"/>
</dbReference>
<dbReference type="Pfam" id="PF00527">
    <property type="entry name" value="E7"/>
    <property type="match status" value="1"/>
</dbReference>
<dbReference type="PIRSF" id="PIRSF003407">
    <property type="entry name" value="Papvi_E7"/>
    <property type="match status" value="1"/>
</dbReference>
<dbReference type="SUPFAM" id="SSF161234">
    <property type="entry name" value="E7 C-terminal domain-like"/>
    <property type="match status" value="1"/>
</dbReference>
<accession>Q80956</accession>
<sequence>MHGKVPTLQEVILELAPQTEIDLQCNEQLDSSEDEDEDEIDHLLERPQQARQAEQHKCYLIHVPCCKCELVVQLDIQSTKEELRVVQQLLMGALTVTCPLCASSK</sequence>
<keyword id="KW-0010">Activator</keyword>
<keyword id="KW-0238">DNA-binding</keyword>
<keyword id="KW-0244">Early protein</keyword>
<keyword id="KW-1078">G1/S host cell cycle checkpoint dysregulation by virus</keyword>
<keyword id="KW-1035">Host cytoplasm</keyword>
<keyword id="KW-1048">Host nucleus</keyword>
<keyword id="KW-0945">Host-virus interaction</keyword>
<keyword id="KW-1090">Inhibition of host innate immune response by virus</keyword>
<keyword id="KW-1114">Inhibition of host interferon signaling pathway by virus</keyword>
<keyword id="KW-0922">Interferon antiviral system evasion</keyword>
<keyword id="KW-0479">Metal-binding</keyword>
<keyword id="KW-1121">Modulation of host cell cycle by virus</keyword>
<keyword id="KW-0553">Oncogene</keyword>
<keyword id="KW-0804">Transcription</keyword>
<keyword id="KW-0805">Transcription regulation</keyword>
<keyword id="KW-0899">Viral immunoevasion</keyword>
<keyword id="KW-0862">Zinc</keyword>
<keyword id="KW-0863">Zinc-finger</keyword>
<gene>
    <name evidence="1" type="primary">E7</name>
</gene>
<comment type="function">
    <text evidence="1">Plays a role in viral genome replication by driving entry of quiescent cells into the cell cycle. Stimulation of progression from G1 to S phase allows the virus to efficiently use the cellular DNA replicating machinery to achieve viral genome replication. E7 protein has both transforming and trans-activating activities. Induces the disassembly of the E2F1 transcription factor from RB1, with subsequent transcriptional activation of E2F1-regulated S-phase genes. Interferes with host histone deacetylation mediated by HDAC1 and HDAC2, leading to transcription activation. Also plays a role in the inhibition of both antiviral and antiproliferative functions of host interferon alpha. Interaction with host TMEM173/STING impairs the ability of TMEM173/STING to sense cytosolic DNA and promote the production of type I interferon (IFN-alpha and IFN-beta).</text>
</comment>
<comment type="subunit">
    <text evidence="1">Homodimer. Homooligomer. Interacts with host RB1; this interaction induces dissociation of RB1-E2F1 complex thereby disrupting RB1 activity. Interacts with host EP300; this interaction represses EP300 transcriptional activity. Interacts with protein E2; this interaction inhibits E7 oncogenic activity. Interacts with host TMEM173/STING; this interaction impairs the ability of TMEM173/STING to sense cytosolic DNA and promote the production of type I interferon (IFN-alpha and IFN-beta).</text>
</comment>
<comment type="subcellular location">
    <subcellularLocation>
        <location evidence="1">Host cytoplasm</location>
    </subcellularLocation>
    <subcellularLocation>
        <location evidence="1">Host nucleus</location>
    </subcellularLocation>
    <text evidence="1">Predominantly found in the host nucleus.</text>
</comment>
<comment type="domain">
    <text evidence="1">The E7 terminal domain is an intrinsically disordered domain, whose flexibility and conformational transitions confer target adaptability to the oncoprotein. It allows adaptation to a variety of protein targets and exposes the PEST degradation sequence that regulates its turnover in the cell.</text>
</comment>
<comment type="PTM">
    <text evidence="1">Highly phosphorylated.</text>
</comment>
<comment type="similarity">
    <text evidence="1">Belongs to the papillomaviridae E7 protein family.</text>
</comment>
<feature type="chain" id="PRO_0000133459" description="Protein E7">
    <location>
        <begin position="1"/>
        <end position="105"/>
    </location>
</feature>
<feature type="zinc finger region" evidence="1">
    <location>
        <begin position="65"/>
        <end position="101"/>
    </location>
</feature>
<feature type="region of interest" description="E7 terminal domain" evidence="1">
    <location>
        <begin position="1"/>
        <end position="45"/>
    </location>
</feature>
<feature type="short sequence motif" description="LXCXE motif; interaction with host RB1 and TMEM173/STING" evidence="1">
    <location>
        <begin position="23"/>
        <end position="27"/>
    </location>
</feature>
<feature type="short sequence motif" description="Nuclear export signal" evidence="1">
    <location>
        <begin position="83"/>
        <end position="91"/>
    </location>
</feature>
<protein>
    <recommendedName>
        <fullName evidence="1">Protein E7</fullName>
    </recommendedName>
</protein>